<feature type="chain" id="PRO_1000192342" description="Phosphoenolpyruvate carboxykinase (ATP)">
    <location>
        <begin position="1"/>
        <end position="539"/>
    </location>
</feature>
<feature type="binding site" evidence="1">
    <location>
        <position position="64"/>
    </location>
    <ligand>
        <name>substrate</name>
    </ligand>
</feature>
<feature type="binding site" evidence="1">
    <location>
        <position position="206"/>
    </location>
    <ligand>
        <name>substrate</name>
    </ligand>
</feature>
<feature type="binding site" evidence="1">
    <location>
        <position position="212"/>
    </location>
    <ligand>
        <name>ATP</name>
        <dbReference type="ChEBI" id="CHEBI:30616"/>
    </ligand>
</feature>
<feature type="binding site" evidence="1">
    <location>
        <position position="212"/>
    </location>
    <ligand>
        <name>Mn(2+)</name>
        <dbReference type="ChEBI" id="CHEBI:29035"/>
    </ligand>
</feature>
<feature type="binding site" evidence="1">
    <location>
        <position position="212"/>
    </location>
    <ligand>
        <name>substrate</name>
    </ligand>
</feature>
<feature type="binding site" evidence="1">
    <location>
        <position position="231"/>
    </location>
    <ligand>
        <name>ATP</name>
        <dbReference type="ChEBI" id="CHEBI:30616"/>
    </ligand>
</feature>
<feature type="binding site" evidence="1">
    <location>
        <position position="231"/>
    </location>
    <ligand>
        <name>Mn(2+)</name>
        <dbReference type="ChEBI" id="CHEBI:29035"/>
    </ligand>
</feature>
<feature type="binding site" evidence="1">
    <location>
        <begin position="247"/>
        <end position="255"/>
    </location>
    <ligand>
        <name>ATP</name>
        <dbReference type="ChEBI" id="CHEBI:30616"/>
    </ligand>
</feature>
<feature type="binding site" evidence="1">
    <location>
        <position position="268"/>
    </location>
    <ligand>
        <name>Mn(2+)</name>
        <dbReference type="ChEBI" id="CHEBI:29035"/>
    </ligand>
</feature>
<feature type="binding site" evidence="1">
    <location>
        <position position="296"/>
    </location>
    <ligand>
        <name>ATP</name>
        <dbReference type="ChEBI" id="CHEBI:30616"/>
    </ligand>
</feature>
<feature type="binding site" evidence="1">
    <location>
        <position position="332"/>
    </location>
    <ligand>
        <name>ATP</name>
        <dbReference type="ChEBI" id="CHEBI:30616"/>
    </ligand>
</feature>
<feature type="binding site" evidence="1">
    <location>
        <position position="332"/>
    </location>
    <ligand>
        <name>substrate</name>
    </ligand>
</feature>
<feature type="binding site" evidence="1">
    <location>
        <begin position="448"/>
        <end position="449"/>
    </location>
    <ligand>
        <name>ATP</name>
        <dbReference type="ChEBI" id="CHEBI:30616"/>
    </ligand>
</feature>
<feature type="binding site" evidence="1">
    <location>
        <position position="454"/>
    </location>
    <ligand>
        <name>ATP</name>
        <dbReference type="ChEBI" id="CHEBI:30616"/>
    </ligand>
</feature>
<comment type="function">
    <text evidence="1">Involved in the gluconeogenesis. Catalyzes the conversion of oxaloacetate (OAA) to phosphoenolpyruvate (PEP) through direct phosphoryl transfer between the nucleoside triphosphate and OAA.</text>
</comment>
<comment type="catalytic activity">
    <reaction evidence="1">
        <text>oxaloacetate + ATP = phosphoenolpyruvate + ADP + CO2</text>
        <dbReference type="Rhea" id="RHEA:18617"/>
        <dbReference type="ChEBI" id="CHEBI:16452"/>
        <dbReference type="ChEBI" id="CHEBI:16526"/>
        <dbReference type="ChEBI" id="CHEBI:30616"/>
        <dbReference type="ChEBI" id="CHEBI:58702"/>
        <dbReference type="ChEBI" id="CHEBI:456216"/>
        <dbReference type="EC" id="4.1.1.49"/>
    </reaction>
</comment>
<comment type="cofactor">
    <cofactor evidence="1">
        <name>Mn(2+)</name>
        <dbReference type="ChEBI" id="CHEBI:29035"/>
    </cofactor>
    <text evidence="1">Binds 1 Mn(2+) ion per subunit.</text>
</comment>
<comment type="pathway">
    <text evidence="1">Carbohydrate biosynthesis; gluconeogenesis.</text>
</comment>
<comment type="subunit">
    <text evidence="1">Monomer.</text>
</comment>
<comment type="subcellular location">
    <subcellularLocation>
        <location evidence="1">Cytoplasm</location>
    </subcellularLocation>
</comment>
<comment type="similarity">
    <text evidence="1">Belongs to the phosphoenolpyruvate carboxykinase (ATP) family.</text>
</comment>
<evidence type="ECO:0000255" key="1">
    <source>
        <dbReference type="HAMAP-Rule" id="MF_00453"/>
    </source>
</evidence>
<accession>B1JI04</accession>
<protein>
    <recommendedName>
        <fullName evidence="1">Phosphoenolpyruvate carboxykinase (ATP)</fullName>
        <shortName evidence="1">PCK</shortName>
        <shortName evidence="1">PEP carboxykinase</shortName>
        <shortName evidence="1">PEPCK</shortName>
        <ecNumber evidence="1">4.1.1.49</ecNumber>
    </recommendedName>
</protein>
<name>PCKA_YERPY</name>
<reference key="1">
    <citation type="submission" date="2008-02" db="EMBL/GenBank/DDBJ databases">
        <title>Complete sequence of Yersinia pseudotuberculosis YPIII.</title>
        <authorList>
            <consortium name="US DOE Joint Genome Institute"/>
            <person name="Copeland A."/>
            <person name="Lucas S."/>
            <person name="Lapidus A."/>
            <person name="Glavina del Rio T."/>
            <person name="Dalin E."/>
            <person name="Tice H."/>
            <person name="Bruce D."/>
            <person name="Goodwin L."/>
            <person name="Pitluck S."/>
            <person name="Munk A.C."/>
            <person name="Brettin T."/>
            <person name="Detter J.C."/>
            <person name="Han C."/>
            <person name="Tapia R."/>
            <person name="Schmutz J."/>
            <person name="Larimer F."/>
            <person name="Land M."/>
            <person name="Hauser L."/>
            <person name="Challacombe J.F."/>
            <person name="Green L."/>
            <person name="Lindler L.E."/>
            <person name="Nikolich M.P."/>
            <person name="Richardson P."/>
        </authorList>
    </citation>
    <scope>NUCLEOTIDE SEQUENCE [LARGE SCALE GENOMIC DNA]</scope>
    <source>
        <strain>YPIII</strain>
    </source>
</reference>
<sequence>MSVKGITPQELAAYGIHNVSEIVYNPSYDLLFEEETKPTLEGYERGTLTTTGAIAVDTGIFTGRSPKDKYIVRDAITQDTVWWADQGKGKNDNKPLSQEIWSHLKGLVTEQLSGKRLFVVDTFCGANADTRLQVRFITEVAWQAHFVKNMFIRPSDEELARFEPDFIVMNGAKCTNPQWKEQGLNSENFVAFNLTERMQLIGGTWYGGEMKKGMFSMMNYLLPLKGIASMHCSANVGEKGDVAIFFGLSGTGKTTLSTDPKRKLIGDDEHGWDDDGVFNFEGGCYAKTIKLSEEAEPDIYHAIKRDALLENVVVLADGTVDFNDGSKTENTRVSYPIYHIDNIVKPVSKAGHATKVIFLTADAFGVLPPVSRLTANQTQYHFLSGFTAKLAGTERGVTEPTPTFSACFGAAFLSLHPTQYAEVLVKRMQAVGAQAYLVNTGWNGTGKRISIKDTRAIIDAILNGEIDKAETFTLPIFDLAVPMALPGVNPDILDPRDTYADKAQWQEKAEDLAKRFATNFDKYTDTPAGAALVSAGPKI</sequence>
<proteinExistence type="inferred from homology"/>
<dbReference type="EC" id="4.1.1.49" evidence="1"/>
<dbReference type="EMBL" id="CP000950">
    <property type="protein sequence ID" value="ACA66487.1"/>
    <property type="molecule type" value="Genomic_DNA"/>
</dbReference>
<dbReference type="RefSeq" id="WP_011193240.1">
    <property type="nucleotide sequence ID" value="NZ_CP009792.1"/>
</dbReference>
<dbReference type="SMR" id="B1JI04"/>
<dbReference type="GeneID" id="49784243"/>
<dbReference type="KEGG" id="ypy:YPK_0174"/>
<dbReference type="PATRIC" id="fig|502800.11.peg.781"/>
<dbReference type="UniPathway" id="UPA00138"/>
<dbReference type="GO" id="GO:0005829">
    <property type="term" value="C:cytosol"/>
    <property type="evidence" value="ECO:0007669"/>
    <property type="project" value="TreeGrafter"/>
</dbReference>
<dbReference type="GO" id="GO:0005524">
    <property type="term" value="F:ATP binding"/>
    <property type="evidence" value="ECO:0007669"/>
    <property type="project" value="UniProtKB-UniRule"/>
</dbReference>
<dbReference type="GO" id="GO:0046872">
    <property type="term" value="F:metal ion binding"/>
    <property type="evidence" value="ECO:0007669"/>
    <property type="project" value="UniProtKB-KW"/>
</dbReference>
<dbReference type="GO" id="GO:0004612">
    <property type="term" value="F:phosphoenolpyruvate carboxykinase (ATP) activity"/>
    <property type="evidence" value="ECO:0007669"/>
    <property type="project" value="UniProtKB-UniRule"/>
</dbReference>
<dbReference type="GO" id="GO:0006094">
    <property type="term" value="P:gluconeogenesis"/>
    <property type="evidence" value="ECO:0007669"/>
    <property type="project" value="UniProtKB-UniRule"/>
</dbReference>
<dbReference type="CDD" id="cd00484">
    <property type="entry name" value="PEPCK_ATP"/>
    <property type="match status" value="1"/>
</dbReference>
<dbReference type="FunFam" id="2.170.8.10:FF:000001">
    <property type="entry name" value="Phosphoenolpyruvate carboxykinase (ATP)"/>
    <property type="match status" value="1"/>
</dbReference>
<dbReference type="FunFam" id="3.40.449.10:FF:000001">
    <property type="entry name" value="Phosphoenolpyruvate carboxykinase (ATP)"/>
    <property type="match status" value="1"/>
</dbReference>
<dbReference type="Gene3D" id="3.90.228.20">
    <property type="match status" value="1"/>
</dbReference>
<dbReference type="Gene3D" id="3.40.449.10">
    <property type="entry name" value="Phosphoenolpyruvate Carboxykinase, domain 1"/>
    <property type="match status" value="1"/>
</dbReference>
<dbReference type="Gene3D" id="2.170.8.10">
    <property type="entry name" value="Phosphoenolpyruvate Carboxykinase, domain 2"/>
    <property type="match status" value="1"/>
</dbReference>
<dbReference type="HAMAP" id="MF_00453">
    <property type="entry name" value="PEPCK_ATP"/>
    <property type="match status" value="1"/>
</dbReference>
<dbReference type="InterPro" id="IPR001272">
    <property type="entry name" value="PEP_carboxykinase_ATP"/>
</dbReference>
<dbReference type="InterPro" id="IPR013035">
    <property type="entry name" value="PEP_carboxykinase_C"/>
</dbReference>
<dbReference type="InterPro" id="IPR008210">
    <property type="entry name" value="PEP_carboxykinase_N"/>
</dbReference>
<dbReference type="InterPro" id="IPR015994">
    <property type="entry name" value="PEPCK_ATP_CS"/>
</dbReference>
<dbReference type="NCBIfam" id="TIGR00224">
    <property type="entry name" value="pckA"/>
    <property type="match status" value="1"/>
</dbReference>
<dbReference type="NCBIfam" id="NF006819">
    <property type="entry name" value="PRK09344.1-1"/>
    <property type="match status" value="1"/>
</dbReference>
<dbReference type="NCBIfam" id="NF006820">
    <property type="entry name" value="PRK09344.1-2"/>
    <property type="match status" value="1"/>
</dbReference>
<dbReference type="NCBIfam" id="NF006821">
    <property type="entry name" value="PRK09344.1-3"/>
    <property type="match status" value="1"/>
</dbReference>
<dbReference type="PANTHER" id="PTHR30031:SF0">
    <property type="entry name" value="PHOSPHOENOLPYRUVATE CARBOXYKINASE (ATP)"/>
    <property type="match status" value="1"/>
</dbReference>
<dbReference type="PANTHER" id="PTHR30031">
    <property type="entry name" value="PHOSPHOENOLPYRUVATE CARBOXYKINASE ATP"/>
    <property type="match status" value="1"/>
</dbReference>
<dbReference type="Pfam" id="PF01293">
    <property type="entry name" value="PEPCK_ATP"/>
    <property type="match status" value="1"/>
</dbReference>
<dbReference type="PIRSF" id="PIRSF006294">
    <property type="entry name" value="PEP_crbxkin"/>
    <property type="match status" value="1"/>
</dbReference>
<dbReference type="SUPFAM" id="SSF68923">
    <property type="entry name" value="PEP carboxykinase N-terminal domain"/>
    <property type="match status" value="1"/>
</dbReference>
<dbReference type="SUPFAM" id="SSF53795">
    <property type="entry name" value="PEP carboxykinase-like"/>
    <property type="match status" value="1"/>
</dbReference>
<dbReference type="PROSITE" id="PS00532">
    <property type="entry name" value="PEPCK_ATP"/>
    <property type="match status" value="1"/>
</dbReference>
<organism>
    <name type="scientific">Yersinia pseudotuberculosis serotype O:3 (strain YPIII)</name>
    <dbReference type="NCBI Taxonomy" id="502800"/>
    <lineage>
        <taxon>Bacteria</taxon>
        <taxon>Pseudomonadati</taxon>
        <taxon>Pseudomonadota</taxon>
        <taxon>Gammaproteobacteria</taxon>
        <taxon>Enterobacterales</taxon>
        <taxon>Yersiniaceae</taxon>
        <taxon>Yersinia</taxon>
    </lineage>
</organism>
<gene>
    <name evidence="1" type="primary">pckA</name>
    <name type="ordered locus">YPK_0174</name>
</gene>
<keyword id="KW-0067">ATP-binding</keyword>
<keyword id="KW-0963">Cytoplasm</keyword>
<keyword id="KW-0210">Decarboxylase</keyword>
<keyword id="KW-0312">Gluconeogenesis</keyword>
<keyword id="KW-0456">Lyase</keyword>
<keyword id="KW-0464">Manganese</keyword>
<keyword id="KW-0479">Metal-binding</keyword>
<keyword id="KW-0547">Nucleotide-binding</keyword>